<comment type="similarity">
    <text evidence="1">Belongs to the myo-inositol 1-phosphate synthase family.</text>
</comment>
<organism>
    <name type="scientific">Mycobacterium leprae (strain TN)</name>
    <dbReference type="NCBI Taxonomy" id="272631"/>
    <lineage>
        <taxon>Bacteria</taxon>
        <taxon>Bacillati</taxon>
        <taxon>Actinomycetota</taxon>
        <taxon>Actinomycetes</taxon>
        <taxon>Mycobacteriales</taxon>
        <taxon>Mycobacteriaceae</taxon>
        <taxon>Mycobacterium</taxon>
    </lineage>
</organism>
<feature type="chain" id="PRO_0000195201" description="Uncharacterized protein ML0396/ML2692">
    <location>
        <begin position="1"/>
        <end position="369"/>
    </location>
</feature>
<sequence>MSEHNPAGAPGASTEVRVAIVGVGNCASSLVQGIEYYQNADDTSTVPGLMHVRFGPYHVRDVKFVAAFDVDAKKVGVDLSDAIFTSENNTIKIADVPPTNVVVQRGPTLDGIGKYYTDTIELSDVPPVDVVQALTEAKTDVLVSYLPVGSEEADKFYAQCAINARVAFVNALPVFIASDPVWAKKFADARVPIVGDDIKSQVGATITHRVMAKLFEDRGVQLDRTMQLNVGGNMDFLNMLERERVQSKKISKTQAVTSNVHREFNTKDIHIGPSDHVGWLDDRKWAYVRLEGRGFGDVPLNLEYKLEVWDSPNSAGVIIDAVRAAKIAKDRGIGGPVIPASSYLMKSPPQQLPDEIARAQLEEFIIDTK</sequence>
<keyword id="KW-1185">Reference proteome</keyword>
<proteinExistence type="inferred from homology"/>
<protein>
    <recommendedName>
        <fullName>Uncharacterized protein ML0396/ML2692</fullName>
    </recommendedName>
</protein>
<accession>Q57240</accession>
<dbReference type="EMBL" id="U00015">
    <property type="protein sequence ID" value="AAC43244.1"/>
    <property type="molecule type" value="Genomic_DNA"/>
</dbReference>
<dbReference type="EMBL" id="L39923">
    <property type="protein sequence ID" value="AAB53124.1"/>
    <property type="molecule type" value="Genomic_DNA"/>
</dbReference>
<dbReference type="EMBL" id="AL583918">
    <property type="protein sequence ID" value="CAC29904.1"/>
    <property type="molecule type" value="Genomic_DNA"/>
</dbReference>
<dbReference type="EMBL" id="AL583926">
    <property type="protein sequence ID" value="CAC32224.1"/>
    <property type="molecule type" value="Genomic_DNA"/>
</dbReference>
<dbReference type="PIR" id="S72835">
    <property type="entry name" value="S72835"/>
</dbReference>
<dbReference type="RefSeq" id="NP_301384.1">
    <property type="nucleotide sequence ID" value="NC_002677.1"/>
</dbReference>
<dbReference type="RefSeq" id="NP_302718.1">
    <property type="nucleotide sequence ID" value="NC_002677.1"/>
</dbReference>
<dbReference type="RefSeq" id="WP_010907708.1">
    <property type="nucleotide sequence ID" value="NC_002677.1"/>
</dbReference>
<dbReference type="SMR" id="Q57240"/>
<dbReference type="STRING" id="272631.gene:17574215"/>
<dbReference type="KEGG" id="mle:ML0396"/>
<dbReference type="KEGG" id="mle:ML2692"/>
<dbReference type="PATRIC" id="fig|272631.5.peg.5186"/>
<dbReference type="Leproma" id="ML0396"/>
<dbReference type="Leproma" id="ML2692"/>
<dbReference type="eggNOG" id="COG1260">
    <property type="taxonomic scope" value="Bacteria"/>
</dbReference>
<dbReference type="HOGENOM" id="CLU_050011_0_0_11"/>
<dbReference type="OrthoDB" id="9766811at2"/>
<dbReference type="Proteomes" id="UP000000806">
    <property type="component" value="Chromosome"/>
</dbReference>
<dbReference type="GO" id="GO:0004512">
    <property type="term" value="F:inositol-3-phosphate synthase activity"/>
    <property type="evidence" value="ECO:0007669"/>
    <property type="project" value="InterPro"/>
</dbReference>
<dbReference type="GO" id="GO:0006021">
    <property type="term" value="P:inositol biosynthetic process"/>
    <property type="evidence" value="ECO:0007669"/>
    <property type="project" value="InterPro"/>
</dbReference>
<dbReference type="GO" id="GO:0008654">
    <property type="term" value="P:phospholipid biosynthetic process"/>
    <property type="evidence" value="ECO:0007669"/>
    <property type="project" value="InterPro"/>
</dbReference>
<dbReference type="Gene3D" id="3.30.360.10">
    <property type="entry name" value="Dihydrodipicolinate Reductase, domain 2"/>
    <property type="match status" value="1"/>
</dbReference>
<dbReference type="Gene3D" id="3.40.50.720">
    <property type="entry name" value="NAD(P)-binding Rossmann-like Domain"/>
    <property type="match status" value="1"/>
</dbReference>
<dbReference type="InterPro" id="IPR052199">
    <property type="entry name" value="MIPS"/>
</dbReference>
<dbReference type="InterPro" id="IPR002587">
    <property type="entry name" value="Myo-inos-1-P_Synthase"/>
</dbReference>
<dbReference type="InterPro" id="IPR017815">
    <property type="entry name" value="Myo-inos-1-P_Synthase_actino"/>
</dbReference>
<dbReference type="InterPro" id="IPR013021">
    <property type="entry name" value="Myo-inos-1-P_Synthase_GAPDH"/>
</dbReference>
<dbReference type="InterPro" id="IPR036291">
    <property type="entry name" value="NAD(P)-bd_dom_sf"/>
</dbReference>
<dbReference type="NCBIfam" id="TIGR03450">
    <property type="entry name" value="mycothiol_INO1"/>
    <property type="match status" value="1"/>
</dbReference>
<dbReference type="PANTHER" id="PTHR43125">
    <property type="entry name" value="INOSITOL-3-PHOSPHATE SYNTHASE"/>
    <property type="match status" value="1"/>
</dbReference>
<dbReference type="PANTHER" id="PTHR43125:SF1">
    <property type="entry name" value="INOSITOL-3-PHOSPHATE SYNTHASE"/>
    <property type="match status" value="1"/>
</dbReference>
<dbReference type="Pfam" id="PF01658">
    <property type="entry name" value="Inos-1-P_synth"/>
    <property type="match status" value="1"/>
</dbReference>
<dbReference type="PIRSF" id="PIRSF015578">
    <property type="entry name" value="Myoinos-ppht_syn"/>
    <property type="match status" value="1"/>
</dbReference>
<dbReference type="SUPFAM" id="SSF55347">
    <property type="entry name" value="Glyceraldehyde-3-phosphate dehydrogenase-like, C-terminal domain"/>
    <property type="match status" value="1"/>
</dbReference>
<dbReference type="SUPFAM" id="SSF51735">
    <property type="entry name" value="NAD(P)-binding Rossmann-fold domains"/>
    <property type="match status" value="1"/>
</dbReference>
<name>Y396_MYCLE</name>
<evidence type="ECO:0000305" key="1"/>
<reference key="1">
    <citation type="submission" date="1994-03" db="EMBL/GenBank/DDBJ databases">
        <authorList>
            <person name="Smith D.R."/>
            <person name="Robison K."/>
        </authorList>
    </citation>
    <scope>NUCLEOTIDE SEQUENCE [GENOMIC DNA]</scope>
</reference>
<reference key="2">
    <citation type="journal article" date="1996" name="Microbiology">
        <title>Gene arrangement and organization in an approximately 76 kb fragment encompassing the oriC region of the chromosome of Mycobacterium leprae.</title>
        <authorList>
            <person name="Fsihi H."/>
            <person name="de Rossi E."/>
            <person name="Salazar L."/>
            <person name="Cantoni R."/>
            <person name="Labo M."/>
            <person name="Riccardi G."/>
            <person name="Takiff H.E."/>
            <person name="Eiglmeier K."/>
            <person name="Bergh S."/>
            <person name="Cole S.T."/>
        </authorList>
    </citation>
    <scope>NUCLEOTIDE SEQUENCE [GENOMIC DNA]</scope>
</reference>
<reference key="3">
    <citation type="journal article" date="2001" name="Nature">
        <title>Massive gene decay in the leprosy bacillus.</title>
        <authorList>
            <person name="Cole S.T."/>
            <person name="Eiglmeier K."/>
            <person name="Parkhill J."/>
            <person name="James K.D."/>
            <person name="Thomson N.R."/>
            <person name="Wheeler P.R."/>
            <person name="Honore N."/>
            <person name="Garnier T."/>
            <person name="Churcher C.M."/>
            <person name="Harris D.E."/>
            <person name="Mungall K.L."/>
            <person name="Basham D."/>
            <person name="Brown D."/>
            <person name="Chillingworth T."/>
            <person name="Connor R."/>
            <person name="Davies R.M."/>
            <person name="Devlin K."/>
            <person name="Duthoy S."/>
            <person name="Feltwell T."/>
            <person name="Fraser A."/>
            <person name="Hamlin N."/>
            <person name="Holroyd S."/>
            <person name="Hornsby T."/>
            <person name="Jagels K."/>
            <person name="Lacroix C."/>
            <person name="Maclean J."/>
            <person name="Moule S."/>
            <person name="Murphy L.D."/>
            <person name="Oliver K."/>
            <person name="Quail M.A."/>
            <person name="Rajandream M.A."/>
            <person name="Rutherford K.M."/>
            <person name="Rutter S."/>
            <person name="Seeger K."/>
            <person name="Simon S."/>
            <person name="Simmonds M."/>
            <person name="Skelton J."/>
            <person name="Squares R."/>
            <person name="Squares S."/>
            <person name="Stevens K."/>
            <person name="Taylor K."/>
            <person name="Whitehead S."/>
            <person name="Woodward J.R."/>
            <person name="Barrell B.G."/>
        </authorList>
    </citation>
    <scope>NUCLEOTIDE SEQUENCE [LARGE SCALE GENOMIC DNA]</scope>
    <source>
        <strain>TN</strain>
    </source>
</reference>
<gene>
    <name type="ordered locus">ML0396</name>
</gene>
<gene>
    <name type="ordered locus">ML2692</name>
    <name type="ORF">B1620_F3_113</name>
    <name type="ORF">L222-ORF2</name>
</gene>